<proteinExistence type="inferred from homology"/>
<sequence>MSFPVAFLLVLFLVPFTFATNNLVVRQKELEIVIGGEVSVNFQIKNHTSQSLNATRISLSQSPYISHPDAILVDNWNANVTVLGSQLVSGAILEALNCTTDGSITCPLDLEDAFARITVIRSHFLAILIQIVGWTYFFAWSISFYPQMYLNFKRKSVVGLNFDFLSLNLVGFCAYAIFNLLMYYNSHVKNEYNIVNPRSPPPVLLNDVVFAVHAFLACFITILQCLFYERDNQSVSSKCIALMIVLISFGFCSAAATVLRKIQLLSFVTSLSYIKMAVTCCKYFPQAYFNYTRKSTVGWSIGNIMLDFTGGTLDILQMILQAVNVNDWSAFYANPVKFGLGFVSIFFDIIFMVQHYVLYPNAEVPHNEYHGVDNPNPDNIARDAEQYAGDSESMESTEPIIVHD</sequence>
<protein>
    <recommendedName>
        <fullName>Cystinosin homolog</fullName>
    </recommendedName>
</protein>
<gene>
    <name type="primary">ctns-1</name>
    <name type="ORF">C41C4.7</name>
</gene>
<keyword id="KW-0025">Alternative splicing</keyword>
<keyword id="KW-0968">Cytoplasmic vesicle</keyword>
<keyword id="KW-0325">Glycoprotein</keyword>
<keyword id="KW-0458">Lysosome</keyword>
<keyword id="KW-0472">Membrane</keyword>
<keyword id="KW-1185">Reference proteome</keyword>
<keyword id="KW-0677">Repeat</keyword>
<keyword id="KW-0769">Symport</keyword>
<keyword id="KW-0812">Transmembrane</keyword>
<keyword id="KW-1133">Transmembrane helix</keyword>
<keyword id="KW-0813">Transport</keyword>
<organism>
    <name type="scientific">Caenorhabditis elegans</name>
    <dbReference type="NCBI Taxonomy" id="6239"/>
    <lineage>
        <taxon>Eukaryota</taxon>
        <taxon>Metazoa</taxon>
        <taxon>Ecdysozoa</taxon>
        <taxon>Nematoda</taxon>
        <taxon>Chromadorea</taxon>
        <taxon>Rhabditida</taxon>
        <taxon>Rhabditina</taxon>
        <taxon>Rhabditomorpha</taxon>
        <taxon>Rhabditoidea</taxon>
        <taxon>Rhabditidae</taxon>
        <taxon>Peloderinae</taxon>
        <taxon>Caenorhabditis</taxon>
    </lineage>
</organism>
<dbReference type="EMBL" id="Z48045">
    <property type="protein sequence ID" value="CAA88102.2"/>
    <property type="molecule type" value="Genomic_DNA"/>
</dbReference>
<dbReference type="EMBL" id="Z48045">
    <property type="protein sequence ID" value="CAD56564.1"/>
    <property type="molecule type" value="Genomic_DNA"/>
</dbReference>
<dbReference type="PIR" id="T19875">
    <property type="entry name" value="T19875"/>
</dbReference>
<dbReference type="RefSeq" id="NP_495704.1">
    <molecule id="Q09500-1"/>
    <property type="nucleotide sequence ID" value="NM_063303.7"/>
</dbReference>
<dbReference type="RefSeq" id="NP_872022.1">
    <molecule id="Q09500-2"/>
    <property type="nucleotide sequence ID" value="NM_182222.6"/>
</dbReference>
<dbReference type="SMR" id="Q09500"/>
<dbReference type="BioGRID" id="39637">
    <property type="interactions" value="1"/>
</dbReference>
<dbReference type="FunCoup" id="Q09500">
    <property type="interactions" value="2122"/>
</dbReference>
<dbReference type="IntAct" id="Q09500">
    <property type="interactions" value="1"/>
</dbReference>
<dbReference type="STRING" id="6239.C41C4.7a.1"/>
<dbReference type="GlyCosmos" id="Q09500">
    <property type="glycosylation" value="4 sites, No reported glycans"/>
</dbReference>
<dbReference type="PaxDb" id="6239-C41C4.7a"/>
<dbReference type="PeptideAtlas" id="Q09500"/>
<dbReference type="EnsemblMetazoa" id="C41C4.7a.1">
    <molecule id="Q09500-1"/>
    <property type="protein sequence ID" value="C41C4.7a.1"/>
    <property type="gene ID" value="WBGene00008052"/>
</dbReference>
<dbReference type="EnsemblMetazoa" id="C41C4.7b.1">
    <molecule id="Q09500-2"/>
    <property type="protein sequence ID" value="C41C4.7b.1"/>
    <property type="gene ID" value="WBGene00008052"/>
</dbReference>
<dbReference type="GeneID" id="174308"/>
<dbReference type="KEGG" id="cel:CELE_C41C4.7"/>
<dbReference type="UCSC" id="C41C4.7a">
    <property type="organism name" value="c. elegans"/>
</dbReference>
<dbReference type="AGR" id="WB:WBGene00008052"/>
<dbReference type="CTD" id="174308"/>
<dbReference type="WormBase" id="C41C4.7a">
    <molecule id="Q09500-1"/>
    <property type="protein sequence ID" value="CE28541"/>
    <property type="gene ID" value="WBGene00008052"/>
    <property type="gene designation" value="ctns-1"/>
</dbReference>
<dbReference type="WormBase" id="C41C4.7b">
    <molecule id="Q09500-2"/>
    <property type="protein sequence ID" value="CE32325"/>
    <property type="gene ID" value="WBGene00008052"/>
    <property type="gene designation" value="ctns-1"/>
</dbReference>
<dbReference type="eggNOG" id="KOG3145">
    <property type="taxonomic scope" value="Eukaryota"/>
</dbReference>
<dbReference type="GeneTree" id="ENSGT00390000005338"/>
<dbReference type="InParanoid" id="Q09500"/>
<dbReference type="OMA" id="LAFAYHG"/>
<dbReference type="OrthoDB" id="75720at2759"/>
<dbReference type="PhylomeDB" id="Q09500"/>
<dbReference type="Reactome" id="R-CEL-425393">
    <property type="pathway name" value="Transport of inorganic cations/anions and amino acids/oligopeptides"/>
</dbReference>
<dbReference type="Reactome" id="R-CEL-5223345">
    <property type="pathway name" value="Miscellaneous transport and binding events"/>
</dbReference>
<dbReference type="PRO" id="PR:Q09500"/>
<dbReference type="Proteomes" id="UP000001940">
    <property type="component" value="Chromosome II"/>
</dbReference>
<dbReference type="Bgee" id="WBGene00008052">
    <property type="expression patterns" value="Expressed in germ line (C elegans) and 4 other cell types or tissues"/>
</dbReference>
<dbReference type="GO" id="GO:0005765">
    <property type="term" value="C:lysosomal membrane"/>
    <property type="evidence" value="ECO:0000314"/>
    <property type="project" value="WormBase"/>
</dbReference>
<dbReference type="GO" id="GO:0005764">
    <property type="term" value="C:lysosome"/>
    <property type="evidence" value="ECO:0000314"/>
    <property type="project" value="UniProtKB"/>
</dbReference>
<dbReference type="GO" id="GO:0045335">
    <property type="term" value="C:phagocytic vesicle"/>
    <property type="evidence" value="ECO:0007669"/>
    <property type="project" value="UniProtKB-SubCell"/>
</dbReference>
<dbReference type="GO" id="GO:0034639">
    <property type="term" value="F:L-amino acid efflux transmembrane transporter activity"/>
    <property type="evidence" value="ECO:0000305"/>
    <property type="project" value="WormBase"/>
</dbReference>
<dbReference type="GO" id="GO:0015184">
    <property type="term" value="F:L-cystine transmembrane transporter activity"/>
    <property type="evidence" value="ECO:0000318"/>
    <property type="project" value="GO_Central"/>
</dbReference>
<dbReference type="GO" id="GO:0015293">
    <property type="term" value="F:symporter activity"/>
    <property type="evidence" value="ECO:0007669"/>
    <property type="project" value="UniProtKB-KW"/>
</dbReference>
<dbReference type="GO" id="GO:0015811">
    <property type="term" value="P:L-cystine transport"/>
    <property type="evidence" value="ECO:0000315"/>
    <property type="project" value="WormBase"/>
</dbReference>
<dbReference type="GO" id="GO:0007040">
    <property type="term" value="P:lysosome organization"/>
    <property type="evidence" value="ECO:0000315"/>
    <property type="project" value="WormBase"/>
</dbReference>
<dbReference type="GO" id="GO:0006909">
    <property type="term" value="P:phagocytosis"/>
    <property type="evidence" value="ECO:0000314"/>
    <property type="project" value="UniProtKB"/>
</dbReference>
<dbReference type="FunFam" id="1.20.1280.290:FF:000016">
    <property type="entry name" value="Cystinosin homolog"/>
    <property type="match status" value="1"/>
</dbReference>
<dbReference type="FunFam" id="1.20.1280.290:FF:000023">
    <property type="entry name" value="Cystinosin homolog"/>
    <property type="match status" value="1"/>
</dbReference>
<dbReference type="Gene3D" id="1.20.1280.290">
    <property type="match status" value="1"/>
</dbReference>
<dbReference type="InterPro" id="IPR005282">
    <property type="entry name" value="LC_transporter"/>
</dbReference>
<dbReference type="InterPro" id="IPR006603">
    <property type="entry name" value="PQ-loop_rpt"/>
</dbReference>
<dbReference type="NCBIfam" id="TIGR00951">
    <property type="entry name" value="2A43"/>
    <property type="match status" value="1"/>
</dbReference>
<dbReference type="PANTHER" id="PTHR13131">
    <property type="entry name" value="CYSTINOSIN"/>
    <property type="match status" value="1"/>
</dbReference>
<dbReference type="PANTHER" id="PTHR13131:SF5">
    <property type="entry name" value="CYSTINOSIN"/>
    <property type="match status" value="1"/>
</dbReference>
<dbReference type="Pfam" id="PF04193">
    <property type="entry name" value="PQ-loop"/>
    <property type="match status" value="2"/>
</dbReference>
<dbReference type="SMART" id="SM00679">
    <property type="entry name" value="CTNS"/>
    <property type="match status" value="2"/>
</dbReference>
<evidence type="ECO:0000250" key="1">
    <source>
        <dbReference type="UniProtKB" id="O60931"/>
    </source>
</evidence>
<evidence type="ECO:0000255" key="2"/>
<evidence type="ECO:0000269" key="3">
    <source>
    </source>
</evidence>
<evidence type="ECO:0000305" key="4"/>
<name>CTNS_CAEEL</name>
<reference key="1">
    <citation type="journal article" date="1998" name="Science">
        <title>Genome sequence of the nematode C. elegans: a platform for investigating biology.</title>
        <authorList>
            <consortium name="The C. elegans sequencing consortium"/>
        </authorList>
    </citation>
    <scope>NUCLEOTIDE SEQUENCE [LARGE SCALE GENOMIC DNA]</scope>
    <scope>ALTERNATIVE SPLICING</scope>
    <source>
        <strain>Bristol N2</strain>
    </source>
</reference>
<reference key="2">
    <citation type="journal article" date="2008" name="PLoS Biol.">
        <title>Phagocytic receptor CED-1 initiates a signaling pathway for degrading engulfed apoptotic cells.</title>
        <authorList>
            <person name="Yu X."/>
            <person name="Lu N."/>
            <person name="Zhou Z."/>
        </authorList>
    </citation>
    <scope>FUNCTION</scope>
    <scope>SUBCELLULAR LOCATION</scope>
</reference>
<comment type="function">
    <text evidence="1 3">Cystine/H(+) symporter that mediates export of cystine, the oxidized dimer of cysteine, from lysosomes (By similarity). May play a role in the degradation of engulfed apoptotic cells (PubMed:18351800).</text>
</comment>
<comment type="catalytic activity">
    <reaction evidence="1">
        <text>L-cystine(out) + H(+)(out) = L-cystine(in) + H(+)(in)</text>
        <dbReference type="Rhea" id="RHEA:66172"/>
        <dbReference type="ChEBI" id="CHEBI:15378"/>
        <dbReference type="ChEBI" id="CHEBI:35491"/>
    </reaction>
    <physiologicalReaction direction="left-to-right" evidence="1">
        <dbReference type="Rhea" id="RHEA:66173"/>
    </physiologicalReaction>
</comment>
<comment type="subcellular location">
    <subcellularLocation>
        <location evidence="3">Lysosome membrane</location>
        <topology evidence="3">Multi-pass membrane protein</topology>
    </subcellularLocation>
    <subcellularLocation>
        <location evidence="3">Cytoplasmic vesicle</location>
        <location evidence="3">Phagosome</location>
    </subcellularLocation>
    <text evidence="3">During degradation of apoptotic cells when lysosomes fuse to phagosomes, located to phagosomal surfaces until the cell corpse is fully degraded.</text>
</comment>
<comment type="alternative products">
    <event type="alternative splicing"/>
    <isoform>
        <id>Q09500-1</id>
        <name>a</name>
        <sequence type="displayed"/>
    </isoform>
    <isoform>
        <id>Q09500-2</id>
        <name>b</name>
        <sequence type="described" ref="VSP_035818 VSP_035819"/>
    </isoform>
</comment>
<comment type="similarity">
    <text evidence="4">Belongs to the cystinosin family.</text>
</comment>
<accession>Q09500</accession>
<accession>Q8I4M4</accession>
<feature type="chain" id="PRO_0000205516" description="Cystinosin homolog">
    <location>
        <begin position="1"/>
        <end position="404"/>
    </location>
</feature>
<feature type="topological domain" description="Lumenal" evidence="2">
    <location>
        <begin position="20"/>
        <end position="123"/>
    </location>
</feature>
<feature type="transmembrane region" description="Helical" evidence="2">
    <location>
        <begin position="124"/>
        <end position="144"/>
    </location>
</feature>
<feature type="topological domain" description="Cytoplasmic" evidence="2">
    <location>
        <begin position="145"/>
        <end position="163"/>
    </location>
</feature>
<feature type="transmembrane region" description="Helical" evidence="2">
    <location>
        <begin position="164"/>
        <end position="184"/>
    </location>
</feature>
<feature type="topological domain" description="Lumenal" evidence="2">
    <location>
        <begin position="185"/>
        <end position="207"/>
    </location>
</feature>
<feature type="transmembrane region" description="Helical" evidence="2">
    <location>
        <begin position="208"/>
        <end position="228"/>
    </location>
</feature>
<feature type="topological domain" description="Cytoplasmic" evidence="2">
    <location>
        <begin position="229"/>
        <end position="238"/>
    </location>
</feature>
<feature type="transmembrane region" description="Helical" evidence="2">
    <location>
        <begin position="239"/>
        <end position="259"/>
    </location>
</feature>
<feature type="topological domain" description="Lumenal" evidence="2">
    <location>
        <begin position="260"/>
        <end position="263"/>
    </location>
</feature>
<feature type="transmembrane region" description="Helical" evidence="2">
    <location>
        <begin position="264"/>
        <end position="285"/>
    </location>
</feature>
<feature type="topological domain" description="Cytoplasmic" evidence="2">
    <location>
        <begin position="286"/>
        <end position="295"/>
    </location>
</feature>
<feature type="transmembrane region" description="Helical" evidence="2">
    <location>
        <begin position="296"/>
        <end position="316"/>
    </location>
</feature>
<feature type="topological domain" description="Lumenal" evidence="2">
    <location>
        <begin position="317"/>
        <end position="337"/>
    </location>
</feature>
<feature type="transmembrane region" description="Helical" evidence="2">
    <location>
        <begin position="338"/>
        <end position="358"/>
    </location>
</feature>
<feature type="topological domain" description="Cytoplasmic" evidence="2">
    <location>
        <begin position="359"/>
        <end position="404"/>
    </location>
</feature>
<feature type="domain" description="PQ-loop 1">
    <location>
        <begin position="125"/>
        <end position="191"/>
    </location>
</feature>
<feature type="domain" description="PQ-loop 2">
    <location>
        <begin position="266"/>
        <end position="327"/>
    </location>
</feature>
<feature type="glycosylation site" description="N-linked (GlcNAc...) asparagine" evidence="2">
    <location>
        <position position="46"/>
    </location>
</feature>
<feature type="glycosylation site" description="N-linked (GlcNAc...) asparagine" evidence="2">
    <location>
        <position position="53"/>
    </location>
</feature>
<feature type="glycosylation site" description="N-linked (GlcNAc...) asparagine" evidence="2">
    <location>
        <position position="79"/>
    </location>
</feature>
<feature type="glycosylation site" description="N-linked (GlcNAc...) asparagine" evidence="2">
    <location>
        <position position="97"/>
    </location>
</feature>
<feature type="splice variant" id="VSP_035818" description="In isoform b." evidence="4">
    <original>VPHNEYHGVDN</original>
    <variation>EPKKNQETSRF</variation>
    <location>
        <begin position="364"/>
        <end position="374"/>
    </location>
</feature>
<feature type="splice variant" id="VSP_035819" description="In isoform b." evidence="4">
    <location>
        <begin position="375"/>
        <end position="404"/>
    </location>
</feature>